<reference key="1">
    <citation type="journal article" date="2009" name="Genome Res.">
        <title>Whole genome sequence of Desulfovibrio magneticus strain RS-1 revealed common gene clusters in magnetotactic bacteria.</title>
        <authorList>
            <person name="Nakazawa H."/>
            <person name="Arakaki A."/>
            <person name="Narita-Yamada S."/>
            <person name="Yashiro I."/>
            <person name="Jinno K."/>
            <person name="Aoki N."/>
            <person name="Tsuruyama A."/>
            <person name="Okamura Y."/>
            <person name="Tanikawa S."/>
            <person name="Fujita N."/>
            <person name="Takeyama H."/>
            <person name="Matsunaga T."/>
        </authorList>
    </citation>
    <scope>NUCLEOTIDE SEQUENCE [LARGE SCALE GENOMIC DNA]</scope>
    <source>
        <strain>ATCC 700980 / DSM 13731 / RS-1</strain>
    </source>
</reference>
<comment type="function">
    <text evidence="1">Catalyzes the synthesis of alpha-ribazole-5'-phosphate from nicotinate mononucleotide (NAMN) and 5,6-dimethylbenzimidazole (DMB).</text>
</comment>
<comment type="catalytic activity">
    <reaction evidence="1">
        <text>5,6-dimethylbenzimidazole + nicotinate beta-D-ribonucleotide = alpha-ribazole 5'-phosphate + nicotinate + H(+)</text>
        <dbReference type="Rhea" id="RHEA:11196"/>
        <dbReference type="ChEBI" id="CHEBI:15378"/>
        <dbReference type="ChEBI" id="CHEBI:15890"/>
        <dbReference type="ChEBI" id="CHEBI:32544"/>
        <dbReference type="ChEBI" id="CHEBI:57502"/>
        <dbReference type="ChEBI" id="CHEBI:57918"/>
        <dbReference type="EC" id="2.4.2.21"/>
    </reaction>
</comment>
<comment type="pathway">
    <text evidence="1">Nucleoside biosynthesis; alpha-ribazole biosynthesis; alpha-ribazole from 5,6-dimethylbenzimidazole: step 1/2.</text>
</comment>
<comment type="similarity">
    <text evidence="1">Belongs to the CobT family.</text>
</comment>
<organism>
    <name type="scientific">Solidesulfovibrio magneticus (strain ATCC 700980 / DSM 13731 / RS-1)</name>
    <name type="common">Desulfovibrio magneticus</name>
    <dbReference type="NCBI Taxonomy" id="573370"/>
    <lineage>
        <taxon>Bacteria</taxon>
        <taxon>Pseudomonadati</taxon>
        <taxon>Thermodesulfobacteriota</taxon>
        <taxon>Desulfovibrionia</taxon>
        <taxon>Desulfovibrionales</taxon>
        <taxon>Desulfovibrionaceae</taxon>
        <taxon>Solidesulfovibrio</taxon>
    </lineage>
</organism>
<proteinExistence type="inferred from homology"/>
<dbReference type="EC" id="2.4.2.21" evidence="1"/>
<dbReference type="EMBL" id="AP010904">
    <property type="protein sequence ID" value="BAH77294.1"/>
    <property type="molecule type" value="Genomic_DNA"/>
</dbReference>
<dbReference type="RefSeq" id="WP_015862434.1">
    <property type="nucleotide sequence ID" value="NC_012796.1"/>
</dbReference>
<dbReference type="SMR" id="C4XMZ1"/>
<dbReference type="STRING" id="573370.DMR_38030"/>
<dbReference type="KEGG" id="dma:DMR_38030"/>
<dbReference type="eggNOG" id="COG2038">
    <property type="taxonomic scope" value="Bacteria"/>
</dbReference>
<dbReference type="HOGENOM" id="CLU_002982_0_0_7"/>
<dbReference type="OrthoDB" id="9781491at2"/>
<dbReference type="UniPathway" id="UPA00061">
    <property type="reaction ID" value="UER00516"/>
</dbReference>
<dbReference type="Proteomes" id="UP000009071">
    <property type="component" value="Chromosome"/>
</dbReference>
<dbReference type="GO" id="GO:0008939">
    <property type="term" value="F:nicotinate-nucleotide-dimethylbenzimidazole phosphoribosyltransferase activity"/>
    <property type="evidence" value="ECO:0007669"/>
    <property type="project" value="UniProtKB-UniRule"/>
</dbReference>
<dbReference type="GO" id="GO:0009236">
    <property type="term" value="P:cobalamin biosynthetic process"/>
    <property type="evidence" value="ECO:0007669"/>
    <property type="project" value="UniProtKB-KW"/>
</dbReference>
<dbReference type="CDD" id="cd02439">
    <property type="entry name" value="DMB-PRT_CobT"/>
    <property type="match status" value="1"/>
</dbReference>
<dbReference type="FunFam" id="3.40.50.10210:FF:000001">
    <property type="entry name" value="Nicotinate-nucleotide--dimethylbenzimidazole phosphoribosyltransferase"/>
    <property type="match status" value="1"/>
</dbReference>
<dbReference type="Gene3D" id="1.10.1610.10">
    <property type="match status" value="1"/>
</dbReference>
<dbReference type="Gene3D" id="3.40.50.10210">
    <property type="match status" value="1"/>
</dbReference>
<dbReference type="HAMAP" id="MF_00230">
    <property type="entry name" value="CobT"/>
    <property type="match status" value="1"/>
</dbReference>
<dbReference type="InterPro" id="IPR003200">
    <property type="entry name" value="Nict_dMeBzImd_PRibTrfase"/>
</dbReference>
<dbReference type="InterPro" id="IPR017846">
    <property type="entry name" value="Nict_dMeBzImd_PRibTrfase_bact"/>
</dbReference>
<dbReference type="InterPro" id="IPR023195">
    <property type="entry name" value="Nict_dMeBzImd_PRibTrfase_N"/>
</dbReference>
<dbReference type="InterPro" id="IPR036087">
    <property type="entry name" value="Nict_dMeBzImd_PRibTrfase_sf"/>
</dbReference>
<dbReference type="NCBIfam" id="TIGR03160">
    <property type="entry name" value="cobT_DBIPRT"/>
    <property type="match status" value="1"/>
</dbReference>
<dbReference type="NCBIfam" id="NF000996">
    <property type="entry name" value="PRK00105.1"/>
    <property type="match status" value="1"/>
</dbReference>
<dbReference type="PANTHER" id="PTHR43463">
    <property type="entry name" value="NICOTINATE-NUCLEOTIDE--DIMETHYLBENZIMIDAZOLE PHOSPHORIBOSYLTRANSFERASE"/>
    <property type="match status" value="1"/>
</dbReference>
<dbReference type="PANTHER" id="PTHR43463:SF1">
    <property type="entry name" value="NICOTINATE-NUCLEOTIDE--DIMETHYLBENZIMIDAZOLE PHOSPHORIBOSYLTRANSFERASE"/>
    <property type="match status" value="1"/>
</dbReference>
<dbReference type="Pfam" id="PF02277">
    <property type="entry name" value="DBI_PRT"/>
    <property type="match status" value="1"/>
</dbReference>
<dbReference type="SUPFAM" id="SSF52733">
    <property type="entry name" value="Nicotinate mononucleotide:5,6-dimethylbenzimidazole phosphoribosyltransferase (CobT)"/>
    <property type="match status" value="1"/>
</dbReference>
<sequence length="354" mass="35236">MSRVLSEVLAAVRPVDQSLFPVAKAHLDNLTKPRGSLGRLEELAARLFVIGGGAKPVVDPARIYVCAGDHGVAAEGVSLFPQEVTRQMVANFLAGGAGINVLAATAGIDLRVVDAGCLGDPFAPHPRFAGARVASGTANLAEAPAMTREQCESALLLGVSLAEAAAAEGVRALGTGDMGIANTTPSTALFCAYLGLSPAEITGPGTGLDAGGVGRKAAIVAKGLALHADVVAGGDPVAVLACLGGLEIACLAGLVIGAAACRLPIAVDGFISTAAYVAARAICPTVADYAVVSHASAEPGYAPIMAALGQKPLLDLGLRLGEGTGAALALFLMRSACNIYNDMATFASAGVSEG</sequence>
<protein>
    <recommendedName>
        <fullName evidence="1">Nicotinate-nucleotide--dimethylbenzimidazole phosphoribosyltransferase</fullName>
        <shortName evidence="1">NN:DBI PRT</shortName>
        <ecNumber evidence="1">2.4.2.21</ecNumber>
    </recommendedName>
    <alternativeName>
        <fullName evidence="1">N(1)-alpha-phosphoribosyltransferase</fullName>
    </alternativeName>
</protein>
<gene>
    <name evidence="1" type="primary">cobT</name>
    <name type="ordered locus">DMR_38030</name>
</gene>
<feature type="chain" id="PRO_1000204365" description="Nicotinate-nucleotide--dimethylbenzimidazole phosphoribosyltransferase">
    <location>
        <begin position="1"/>
        <end position="354"/>
    </location>
</feature>
<feature type="active site" description="Proton acceptor" evidence="1">
    <location>
        <position position="322"/>
    </location>
</feature>
<accession>C4XMZ1</accession>
<name>COBT_SOLM1</name>
<evidence type="ECO:0000255" key="1">
    <source>
        <dbReference type="HAMAP-Rule" id="MF_00230"/>
    </source>
</evidence>
<keyword id="KW-0169">Cobalamin biosynthesis</keyword>
<keyword id="KW-0328">Glycosyltransferase</keyword>
<keyword id="KW-0808">Transferase</keyword>